<feature type="signal peptide" evidence="1">
    <location>
        <begin position="1"/>
        <end position="19"/>
    </location>
</feature>
<feature type="chain" id="PRO_0000023683" description="Peroxidase 17">
    <location>
        <begin position="20"/>
        <end position="329"/>
    </location>
</feature>
<feature type="active site" description="Proton acceptor" evidence="2">
    <location>
        <position position="63"/>
    </location>
</feature>
<feature type="binding site" evidence="2">
    <location>
        <position position="64"/>
    </location>
    <ligand>
        <name>Ca(2+)</name>
        <dbReference type="ChEBI" id="CHEBI:29108"/>
        <label>1</label>
    </ligand>
</feature>
<feature type="binding site" evidence="2">
    <location>
        <position position="67"/>
    </location>
    <ligand>
        <name>Ca(2+)</name>
        <dbReference type="ChEBI" id="CHEBI:29108"/>
        <label>1</label>
    </ligand>
</feature>
<feature type="binding site" evidence="2">
    <location>
        <position position="69"/>
    </location>
    <ligand>
        <name>Ca(2+)</name>
        <dbReference type="ChEBI" id="CHEBI:29108"/>
        <label>1</label>
    </ligand>
</feature>
<feature type="binding site" evidence="2">
    <location>
        <position position="71"/>
    </location>
    <ligand>
        <name>Ca(2+)</name>
        <dbReference type="ChEBI" id="CHEBI:29108"/>
        <label>1</label>
    </ligand>
</feature>
<feature type="binding site" evidence="2">
    <location>
        <position position="73"/>
    </location>
    <ligand>
        <name>Ca(2+)</name>
        <dbReference type="ChEBI" id="CHEBI:29108"/>
        <label>1</label>
    </ligand>
</feature>
<feature type="binding site" evidence="2">
    <location>
        <position position="160"/>
    </location>
    <ligand>
        <name>substrate</name>
    </ligand>
</feature>
<feature type="binding site" description="axial binding residue" evidence="2">
    <location>
        <position position="190"/>
    </location>
    <ligand>
        <name>heme b</name>
        <dbReference type="ChEBI" id="CHEBI:60344"/>
    </ligand>
    <ligandPart>
        <name>Fe</name>
        <dbReference type="ChEBI" id="CHEBI:18248"/>
    </ligandPart>
</feature>
<feature type="binding site" evidence="2">
    <location>
        <position position="191"/>
    </location>
    <ligand>
        <name>Ca(2+)</name>
        <dbReference type="ChEBI" id="CHEBI:29108"/>
        <label>2</label>
    </ligand>
</feature>
<feature type="binding site" evidence="2">
    <location>
        <position position="242"/>
    </location>
    <ligand>
        <name>Ca(2+)</name>
        <dbReference type="ChEBI" id="CHEBI:29108"/>
        <label>2</label>
    </ligand>
</feature>
<feature type="binding site" evidence="2">
    <location>
        <position position="244"/>
    </location>
    <ligand>
        <name>Ca(2+)</name>
        <dbReference type="ChEBI" id="CHEBI:29108"/>
        <label>2</label>
    </ligand>
</feature>
<feature type="binding site" evidence="2">
    <location>
        <position position="249"/>
    </location>
    <ligand>
        <name>Ca(2+)</name>
        <dbReference type="ChEBI" id="CHEBI:29108"/>
        <label>2</label>
    </ligand>
</feature>
<feature type="site" description="Transition state stabilizer" evidence="2">
    <location>
        <position position="59"/>
    </location>
</feature>
<feature type="glycosylation site" description="N-linked (GlcNAc...) asparagine" evidence="1">
    <location>
        <position position="165"/>
    </location>
</feature>
<feature type="glycosylation site" description="N-linked (GlcNAc...) asparagine" evidence="1">
    <location>
        <position position="177"/>
    </location>
</feature>
<feature type="glycosylation site" description="N-linked (GlcNAc...) asparagine" evidence="1">
    <location>
        <position position="206"/>
    </location>
</feature>
<feature type="glycosylation site" description="N-linked (GlcNAc...) asparagine" evidence="1">
    <location>
        <position position="236"/>
    </location>
</feature>
<feature type="disulfide bond" evidence="2">
    <location>
        <begin position="32"/>
        <end position="112"/>
    </location>
</feature>
<feature type="disulfide bond" evidence="2">
    <location>
        <begin position="65"/>
        <end position="70"/>
    </location>
</feature>
<feature type="disulfide bond" evidence="2">
    <location>
        <begin position="118"/>
        <end position="315"/>
    </location>
</feature>
<feature type="disulfide bond" evidence="2">
    <location>
        <begin position="197"/>
        <end position="229"/>
    </location>
</feature>
<organism>
    <name type="scientific">Arabidopsis thaliana</name>
    <name type="common">Mouse-ear cress</name>
    <dbReference type="NCBI Taxonomy" id="3702"/>
    <lineage>
        <taxon>Eukaryota</taxon>
        <taxon>Viridiplantae</taxon>
        <taxon>Streptophyta</taxon>
        <taxon>Embryophyta</taxon>
        <taxon>Tracheophyta</taxon>
        <taxon>Spermatophyta</taxon>
        <taxon>Magnoliopsida</taxon>
        <taxon>eudicotyledons</taxon>
        <taxon>Gunneridae</taxon>
        <taxon>Pentapetalae</taxon>
        <taxon>rosids</taxon>
        <taxon>malvids</taxon>
        <taxon>Brassicales</taxon>
        <taxon>Brassicaceae</taxon>
        <taxon>Camelineae</taxon>
        <taxon>Arabidopsis</taxon>
    </lineage>
</organism>
<keyword id="KW-0106">Calcium</keyword>
<keyword id="KW-1015">Disulfide bond</keyword>
<keyword id="KW-0325">Glycoprotein</keyword>
<keyword id="KW-0349">Heme</keyword>
<keyword id="KW-0376">Hydrogen peroxide</keyword>
<keyword id="KW-0408">Iron</keyword>
<keyword id="KW-0479">Metal-binding</keyword>
<keyword id="KW-0560">Oxidoreductase</keyword>
<keyword id="KW-0575">Peroxidase</keyword>
<keyword id="KW-1185">Reference proteome</keyword>
<keyword id="KW-0964">Secreted</keyword>
<keyword id="KW-0732">Signal</keyword>
<keyword id="KW-0926">Vacuole</keyword>
<reference key="1">
    <citation type="journal article" date="1999" name="Nature">
        <title>Sequence and analysis of chromosome 2 of the plant Arabidopsis thaliana.</title>
        <authorList>
            <person name="Lin X."/>
            <person name="Kaul S."/>
            <person name="Rounsley S.D."/>
            <person name="Shea T.P."/>
            <person name="Benito M.-I."/>
            <person name="Town C.D."/>
            <person name="Fujii C.Y."/>
            <person name="Mason T.M."/>
            <person name="Bowman C.L."/>
            <person name="Barnstead M.E."/>
            <person name="Feldblyum T.V."/>
            <person name="Buell C.R."/>
            <person name="Ketchum K.A."/>
            <person name="Lee J.J."/>
            <person name="Ronning C.M."/>
            <person name="Koo H.L."/>
            <person name="Moffat K.S."/>
            <person name="Cronin L.A."/>
            <person name="Shen M."/>
            <person name="Pai G."/>
            <person name="Van Aken S."/>
            <person name="Umayam L."/>
            <person name="Tallon L.J."/>
            <person name="Gill J.E."/>
            <person name="Adams M.D."/>
            <person name="Carrera A.J."/>
            <person name="Creasy T.H."/>
            <person name="Goodman H.M."/>
            <person name="Somerville C.R."/>
            <person name="Copenhaver G.P."/>
            <person name="Preuss D."/>
            <person name="Nierman W.C."/>
            <person name="White O."/>
            <person name="Eisen J.A."/>
            <person name="Salzberg S.L."/>
            <person name="Fraser C.M."/>
            <person name="Venter J.C."/>
        </authorList>
    </citation>
    <scope>NUCLEOTIDE SEQUENCE [LARGE SCALE GENOMIC DNA]</scope>
    <source>
        <strain>cv. Columbia</strain>
    </source>
</reference>
<reference key="2">
    <citation type="journal article" date="2017" name="Plant J.">
        <title>Araport11: a complete reannotation of the Arabidopsis thaliana reference genome.</title>
        <authorList>
            <person name="Cheng C.Y."/>
            <person name="Krishnakumar V."/>
            <person name="Chan A.P."/>
            <person name="Thibaud-Nissen F."/>
            <person name="Schobel S."/>
            <person name="Town C.D."/>
        </authorList>
    </citation>
    <scope>GENOME REANNOTATION</scope>
    <source>
        <strain>cv. Columbia</strain>
    </source>
</reference>
<reference key="3">
    <citation type="journal article" date="2003" name="Science">
        <title>Empirical analysis of transcriptional activity in the Arabidopsis genome.</title>
        <authorList>
            <person name="Yamada K."/>
            <person name="Lim J."/>
            <person name="Dale J.M."/>
            <person name="Chen H."/>
            <person name="Shinn P."/>
            <person name="Palm C.J."/>
            <person name="Southwick A.M."/>
            <person name="Wu H.C."/>
            <person name="Kim C.J."/>
            <person name="Nguyen M."/>
            <person name="Pham P.K."/>
            <person name="Cheuk R.F."/>
            <person name="Karlin-Newmann G."/>
            <person name="Liu S.X."/>
            <person name="Lam B."/>
            <person name="Sakano H."/>
            <person name="Wu T."/>
            <person name="Yu G."/>
            <person name="Miranda M."/>
            <person name="Quach H.L."/>
            <person name="Tripp M."/>
            <person name="Chang C.H."/>
            <person name="Lee J.M."/>
            <person name="Toriumi M.J."/>
            <person name="Chan M.M."/>
            <person name="Tang C.C."/>
            <person name="Onodera C.S."/>
            <person name="Deng J.M."/>
            <person name="Akiyama K."/>
            <person name="Ansari Y."/>
            <person name="Arakawa T."/>
            <person name="Banh J."/>
            <person name="Banno F."/>
            <person name="Bowser L."/>
            <person name="Brooks S.Y."/>
            <person name="Carninci P."/>
            <person name="Chao Q."/>
            <person name="Choy N."/>
            <person name="Enju A."/>
            <person name="Goldsmith A.D."/>
            <person name="Gurjal M."/>
            <person name="Hansen N.F."/>
            <person name="Hayashizaki Y."/>
            <person name="Johnson-Hopson C."/>
            <person name="Hsuan V.W."/>
            <person name="Iida K."/>
            <person name="Karnes M."/>
            <person name="Khan S."/>
            <person name="Koesema E."/>
            <person name="Ishida J."/>
            <person name="Jiang P.X."/>
            <person name="Jones T."/>
            <person name="Kawai J."/>
            <person name="Kamiya A."/>
            <person name="Meyers C."/>
            <person name="Nakajima M."/>
            <person name="Narusaka M."/>
            <person name="Seki M."/>
            <person name="Sakurai T."/>
            <person name="Satou M."/>
            <person name="Tamse R."/>
            <person name="Vaysberg M."/>
            <person name="Wallender E.K."/>
            <person name="Wong C."/>
            <person name="Yamamura Y."/>
            <person name="Yuan S."/>
            <person name="Shinozaki K."/>
            <person name="Davis R.W."/>
            <person name="Theologis A."/>
            <person name="Ecker J.R."/>
        </authorList>
    </citation>
    <scope>NUCLEOTIDE SEQUENCE [LARGE SCALE MRNA]</scope>
    <source>
        <strain>cv. Columbia</strain>
    </source>
</reference>
<reference key="4">
    <citation type="submission" date="1997-03" db="EMBL/GenBank/DDBJ databases">
        <title>From expressed sequence tags to structure, function, evolution and expression of 28 ER-targeted Arabidopsis peroxidases.</title>
        <authorList>
            <person name="Welinder K.G."/>
            <person name="Jespersen H.M."/>
            <person name="Kjaersgaard I.V.H."/>
            <person name="Justesen A.F."/>
            <person name="Oestergaard L."/>
            <person name="Abelskov A.K."/>
            <person name="Jensen R.B."/>
            <person name="Hansen L.N."/>
            <person name="Rasmussen S.K."/>
        </authorList>
    </citation>
    <scope>NUCLEOTIDE SEQUENCE [MRNA] OF 227-329</scope>
    <source>
        <strain>cv. Columbia</strain>
    </source>
</reference>
<reference key="5">
    <citation type="journal article" date="2002" name="J. Biol. Chem.">
        <title>Monitoring the switch from housekeeping to pathogen defense metabolism in Arabidopsis thaliana using cDNA arrays.</title>
        <authorList>
            <person name="Scheideler M."/>
            <person name="Schlaich N.L."/>
            <person name="Fellenberg K."/>
            <person name="Beissbarth T."/>
            <person name="Hauser N.C."/>
            <person name="Vingron M."/>
            <person name="Slusarenko A.J."/>
            <person name="Hoheisel J.D."/>
        </authorList>
    </citation>
    <scope>INDUCTION</scope>
    <source>
        <strain>cv. Columbia</strain>
    </source>
</reference>
<reference key="6">
    <citation type="journal article" date="2002" name="Gene">
        <title>Analysis and expression of the class III peroxidase large gene family in Arabidopsis thaliana.</title>
        <authorList>
            <person name="Tognolli M."/>
            <person name="Penel C."/>
            <person name="Greppin H."/>
            <person name="Simon P."/>
        </authorList>
    </citation>
    <scope>GENE FAMILY ORGANIZATION</scope>
    <scope>NOMENCLATURE</scope>
    <source>
        <strain>cv. Columbia</strain>
    </source>
</reference>
<proteinExistence type="evidence at transcript level"/>
<comment type="function">
    <text>Removal of H(2)O(2), oxidation of toxic reductants, biosynthesis and degradation of lignin, suberization, auxin catabolism, response to environmental stresses such as wounding, pathogen attack and oxidative stress. These functions might be dependent on each isozyme/isoform in each plant tissue.</text>
</comment>
<comment type="catalytic activity">
    <reaction>
        <text>2 a phenolic donor + H2O2 = 2 a phenolic radical donor + 2 H2O</text>
        <dbReference type="Rhea" id="RHEA:56136"/>
        <dbReference type="ChEBI" id="CHEBI:15377"/>
        <dbReference type="ChEBI" id="CHEBI:16240"/>
        <dbReference type="ChEBI" id="CHEBI:139520"/>
        <dbReference type="ChEBI" id="CHEBI:139521"/>
        <dbReference type="EC" id="1.11.1.7"/>
    </reaction>
</comment>
<comment type="cofactor">
    <cofactor evidence="2">
        <name>heme b</name>
        <dbReference type="ChEBI" id="CHEBI:60344"/>
    </cofactor>
    <text evidence="2">Binds 1 heme b (iron(II)-protoporphyrin IX) group per subunit.</text>
</comment>
<comment type="cofactor">
    <cofactor evidence="2">
        <name>Ca(2+)</name>
        <dbReference type="ChEBI" id="CHEBI:29108"/>
    </cofactor>
    <text evidence="2">Binds 2 calcium ions per subunit.</text>
</comment>
<comment type="subcellular location">
    <subcellularLocation>
        <location evidence="4">Secreted</location>
    </subcellularLocation>
    <subcellularLocation>
        <location evidence="4">Vacuole</location>
    </subcellularLocation>
    <text>Carboxy-terminal extension appears to target the protein to vacuoles.</text>
</comment>
<comment type="induction">
    <text evidence="3">Early induced by infection with an incompatible bacterial plant pathogen.</text>
</comment>
<comment type="miscellaneous">
    <text>There are 73 peroxidase genes in A.thaliana.</text>
</comment>
<comment type="similarity">
    <text evidence="2">Belongs to the peroxidase family. Classical plant (class III) peroxidase subfamily.</text>
</comment>
<dbReference type="EC" id="1.11.1.7"/>
<dbReference type="EMBL" id="AC006592">
    <property type="protein sequence ID" value="AAD22357.1"/>
    <property type="molecule type" value="Genomic_DNA"/>
</dbReference>
<dbReference type="EMBL" id="CP002685">
    <property type="protein sequence ID" value="AEC07301.1"/>
    <property type="molecule type" value="Genomic_DNA"/>
</dbReference>
<dbReference type="EMBL" id="BT004021">
    <property type="protein sequence ID" value="AAO42057.1"/>
    <property type="molecule type" value="mRNA"/>
</dbReference>
<dbReference type="EMBL" id="BT005050">
    <property type="protein sequence ID" value="AAO50583.1"/>
    <property type="molecule type" value="mRNA"/>
</dbReference>
<dbReference type="EMBL" id="Y11790">
    <property type="protein sequence ID" value="CAA72486.1"/>
    <property type="molecule type" value="mRNA"/>
</dbReference>
<dbReference type="PIR" id="D84612">
    <property type="entry name" value="D84612"/>
</dbReference>
<dbReference type="RefSeq" id="NP_179828.1">
    <property type="nucleotide sequence ID" value="NM_127806.4"/>
</dbReference>
<dbReference type="SMR" id="Q9SJZ2"/>
<dbReference type="BioGRID" id="2126">
    <property type="interactions" value="1"/>
</dbReference>
<dbReference type="FunCoup" id="Q9SJZ2">
    <property type="interactions" value="293"/>
</dbReference>
<dbReference type="STRING" id="3702.Q9SJZ2"/>
<dbReference type="PeroxiBase" id="98">
    <property type="entry name" value="AtPrx17"/>
</dbReference>
<dbReference type="GlyCosmos" id="Q9SJZ2">
    <property type="glycosylation" value="4 sites, No reported glycans"/>
</dbReference>
<dbReference type="GlyGen" id="Q9SJZ2">
    <property type="glycosylation" value="4 sites"/>
</dbReference>
<dbReference type="MetOSite" id="Q9SJZ2"/>
<dbReference type="PaxDb" id="3702-AT2G22420.1"/>
<dbReference type="ProteomicsDB" id="234823"/>
<dbReference type="EnsemblPlants" id="AT2G22420.1">
    <property type="protein sequence ID" value="AT2G22420.1"/>
    <property type="gene ID" value="AT2G22420"/>
</dbReference>
<dbReference type="GeneID" id="816773"/>
<dbReference type="Gramene" id="AT2G22420.1">
    <property type="protein sequence ID" value="AT2G22420.1"/>
    <property type="gene ID" value="AT2G22420"/>
</dbReference>
<dbReference type="KEGG" id="ath:AT2G22420"/>
<dbReference type="Araport" id="AT2G22420"/>
<dbReference type="TAIR" id="AT2G22420">
    <property type="gene designation" value="PRX17"/>
</dbReference>
<dbReference type="eggNOG" id="ENOG502QRJD">
    <property type="taxonomic scope" value="Eukaryota"/>
</dbReference>
<dbReference type="HOGENOM" id="CLU_010543_0_1_1"/>
<dbReference type="InParanoid" id="Q9SJZ2"/>
<dbReference type="OMA" id="TFPQTRK"/>
<dbReference type="OrthoDB" id="2113341at2759"/>
<dbReference type="PhylomeDB" id="Q9SJZ2"/>
<dbReference type="BioCyc" id="ARA:AT2G22420-MONOMER"/>
<dbReference type="PRO" id="PR:Q9SJZ2"/>
<dbReference type="Proteomes" id="UP000006548">
    <property type="component" value="Chromosome 2"/>
</dbReference>
<dbReference type="ExpressionAtlas" id="Q9SJZ2">
    <property type="expression patterns" value="baseline and differential"/>
</dbReference>
<dbReference type="GO" id="GO:0005576">
    <property type="term" value="C:extracellular region"/>
    <property type="evidence" value="ECO:0007669"/>
    <property type="project" value="UniProtKB-SubCell"/>
</dbReference>
<dbReference type="GO" id="GO:0009505">
    <property type="term" value="C:plant-type cell wall"/>
    <property type="evidence" value="ECO:0000314"/>
    <property type="project" value="TAIR"/>
</dbReference>
<dbReference type="GO" id="GO:0005773">
    <property type="term" value="C:vacuole"/>
    <property type="evidence" value="ECO:0007669"/>
    <property type="project" value="UniProtKB-SubCell"/>
</dbReference>
<dbReference type="GO" id="GO:0020037">
    <property type="term" value="F:heme binding"/>
    <property type="evidence" value="ECO:0007669"/>
    <property type="project" value="InterPro"/>
</dbReference>
<dbReference type="GO" id="GO:0140825">
    <property type="term" value="F:lactoperoxidase activity"/>
    <property type="evidence" value="ECO:0007669"/>
    <property type="project" value="UniProtKB-EC"/>
</dbReference>
<dbReference type="GO" id="GO:0046872">
    <property type="term" value="F:metal ion binding"/>
    <property type="evidence" value="ECO:0007669"/>
    <property type="project" value="UniProtKB-KW"/>
</dbReference>
<dbReference type="GO" id="GO:0004601">
    <property type="term" value="F:peroxidase activity"/>
    <property type="evidence" value="ECO:0000314"/>
    <property type="project" value="TAIR"/>
</dbReference>
<dbReference type="GO" id="GO:0042744">
    <property type="term" value="P:hydrogen peroxide catabolic process"/>
    <property type="evidence" value="ECO:0007669"/>
    <property type="project" value="UniProtKB-KW"/>
</dbReference>
<dbReference type="GO" id="GO:0009809">
    <property type="term" value="P:lignin biosynthetic process"/>
    <property type="evidence" value="ECO:0000315"/>
    <property type="project" value="TAIR"/>
</dbReference>
<dbReference type="GO" id="GO:0006979">
    <property type="term" value="P:response to oxidative stress"/>
    <property type="evidence" value="ECO:0007669"/>
    <property type="project" value="InterPro"/>
</dbReference>
<dbReference type="GO" id="GO:0010228">
    <property type="term" value="P:vegetative to reproductive phase transition of meristem"/>
    <property type="evidence" value="ECO:0000315"/>
    <property type="project" value="TAIR"/>
</dbReference>
<dbReference type="CDD" id="cd00693">
    <property type="entry name" value="secretory_peroxidase"/>
    <property type="match status" value="1"/>
</dbReference>
<dbReference type="FunFam" id="1.10.420.10:FF:000001">
    <property type="entry name" value="Peroxidase"/>
    <property type="match status" value="1"/>
</dbReference>
<dbReference type="FunFam" id="1.10.520.10:FF:000006">
    <property type="entry name" value="Peroxidase"/>
    <property type="match status" value="1"/>
</dbReference>
<dbReference type="Gene3D" id="1.10.520.10">
    <property type="match status" value="1"/>
</dbReference>
<dbReference type="Gene3D" id="1.10.420.10">
    <property type="entry name" value="Peroxidase, domain 2"/>
    <property type="match status" value="1"/>
</dbReference>
<dbReference type="InterPro" id="IPR002016">
    <property type="entry name" value="Haem_peroxidase"/>
</dbReference>
<dbReference type="InterPro" id="IPR010255">
    <property type="entry name" value="Haem_peroxidase_sf"/>
</dbReference>
<dbReference type="InterPro" id="IPR000823">
    <property type="entry name" value="Peroxidase_pln"/>
</dbReference>
<dbReference type="InterPro" id="IPR019793">
    <property type="entry name" value="Peroxidases_heam-ligand_BS"/>
</dbReference>
<dbReference type="InterPro" id="IPR033905">
    <property type="entry name" value="Secretory_peroxidase"/>
</dbReference>
<dbReference type="PANTHER" id="PTHR31388:SF2">
    <property type="entry name" value="PEROXIDASE 17"/>
    <property type="match status" value="1"/>
</dbReference>
<dbReference type="PANTHER" id="PTHR31388">
    <property type="entry name" value="PEROXIDASE 72-RELATED"/>
    <property type="match status" value="1"/>
</dbReference>
<dbReference type="Pfam" id="PF00141">
    <property type="entry name" value="peroxidase"/>
    <property type="match status" value="1"/>
</dbReference>
<dbReference type="PRINTS" id="PR00458">
    <property type="entry name" value="PEROXIDASE"/>
</dbReference>
<dbReference type="PRINTS" id="PR00461">
    <property type="entry name" value="PLPEROXIDASE"/>
</dbReference>
<dbReference type="SUPFAM" id="SSF48113">
    <property type="entry name" value="Heme-dependent peroxidases"/>
    <property type="match status" value="1"/>
</dbReference>
<dbReference type="PROSITE" id="PS00435">
    <property type="entry name" value="PEROXIDASE_1"/>
    <property type="match status" value="1"/>
</dbReference>
<dbReference type="PROSITE" id="PS50873">
    <property type="entry name" value="PEROXIDASE_4"/>
    <property type="match status" value="1"/>
</dbReference>
<accession>Q9SJZ2</accession>
<accession>P93725</accession>
<name>PER17_ARATH</name>
<sequence length="329" mass="36670">MSLLPHLILYLTLLTVVVTGETLRPRFYSETCPEAESIVRREMKKAMIKEARSVASVMRFQFHDCFVNGCDASLLLDDTPNMLGEKLSLSNIDSLRSFEVVDDIKEALEKACPATVSCADIVIMAARDAVALTGGPDWEVKLGRKDSLTASQQDSDDIMPSPRANATFLIDLFERFNLSVKDMVALSGSHSIGQGRCFSIMFRLYNQSGSGKPDPALEPSYRKKLDKLCPLGGDENVTGDLDATPQVFDNQYFKDLVSGRGFLNSDQTLYTNLVTREYVKMFSEDQDEFFRAFAEGMVKLGDLQSGRPGEIRFNCRVVNRRPIDVLLVS</sequence>
<gene>
    <name type="primary">PER17</name>
    <name type="synonym">P17</name>
    <name type="ordered locus">At2g22420</name>
    <name type="ORF">F14M13.18</name>
</gene>
<protein>
    <recommendedName>
        <fullName>Peroxidase 17</fullName>
        <shortName>Atperox P17</shortName>
        <ecNumber>1.11.1.7</ecNumber>
    </recommendedName>
    <alternativeName>
        <fullName>ATP25a</fullName>
    </alternativeName>
</protein>
<evidence type="ECO:0000255" key="1"/>
<evidence type="ECO:0000255" key="2">
    <source>
        <dbReference type="PROSITE-ProRule" id="PRU00297"/>
    </source>
</evidence>
<evidence type="ECO:0000269" key="3">
    <source>
    </source>
</evidence>
<evidence type="ECO:0000305" key="4"/>